<comment type="developmental stage">
    <text evidence="2">Expressed in late sporogonial stages.</text>
</comment>
<accession>Q8SWL2</accession>
<protein>
    <recommendedName>
        <fullName>RRM-domain-containing protein ECU01_0840</fullName>
    </recommendedName>
</protein>
<gene>
    <name type="ordered locus">ECU01_0840</name>
</gene>
<keyword id="KW-1185">Reference proteome</keyword>
<keyword id="KW-0694">RNA-binding</keyword>
<name>Y184_ENCCU</name>
<proteinExistence type="evidence at protein level"/>
<sequence>MEVVKFEPDTEGIERRRGIKPFGNIGKIRVIKSTTAPRFNLYTTEVGIDCKEEQKQYIPYRPSLEEPAVSNAYVPPTIKRPETCSVKLSNLPLDMTRDRLHSIIKSHTNIFFMSPNLVMNRETGAFRGFAFVTLESRDDAVKLIKDLKGVAIDSLGLSAEIAR</sequence>
<dbReference type="EMBL" id="AL391737">
    <property type="protein sequence ID" value="CAD24954.1"/>
    <property type="molecule type" value="Genomic_DNA"/>
</dbReference>
<dbReference type="RefSeq" id="NP_001402169.1">
    <property type="nucleotide sequence ID" value="NM_001415637.1"/>
</dbReference>
<dbReference type="RefSeq" id="XP_965919.1">
    <property type="nucleotide sequence ID" value="XM_960826.1"/>
</dbReference>
<dbReference type="SMR" id="Q8SWL2"/>
<dbReference type="STRING" id="284813.Q8SWL2"/>
<dbReference type="GeneID" id="860260"/>
<dbReference type="VEuPathDB" id="MicrosporidiaDB:ECU01_0840"/>
<dbReference type="HOGENOM" id="CLU_115018_0_0_1"/>
<dbReference type="InParanoid" id="Q8SWL2"/>
<dbReference type="OMA" id="FTRCTNE"/>
<dbReference type="OrthoDB" id="639027at2759"/>
<dbReference type="Proteomes" id="UP000000819">
    <property type="component" value="Chromosome I"/>
</dbReference>
<dbReference type="GO" id="GO:0003723">
    <property type="term" value="F:RNA binding"/>
    <property type="evidence" value="ECO:0007669"/>
    <property type="project" value="UniProtKB-KW"/>
</dbReference>
<dbReference type="Gene3D" id="3.30.70.330">
    <property type="match status" value="1"/>
</dbReference>
<dbReference type="InterPro" id="IPR012677">
    <property type="entry name" value="Nucleotide-bd_a/b_plait_sf"/>
</dbReference>
<dbReference type="InterPro" id="IPR035979">
    <property type="entry name" value="RBD_domain_sf"/>
</dbReference>
<dbReference type="InterPro" id="IPR000504">
    <property type="entry name" value="RRM_dom"/>
</dbReference>
<dbReference type="Pfam" id="PF00076">
    <property type="entry name" value="RRM_1"/>
    <property type="match status" value="1"/>
</dbReference>
<dbReference type="SMART" id="SM00360">
    <property type="entry name" value="RRM"/>
    <property type="match status" value="1"/>
</dbReference>
<dbReference type="SUPFAM" id="SSF54928">
    <property type="entry name" value="RNA-binding domain, RBD"/>
    <property type="match status" value="1"/>
</dbReference>
<dbReference type="PROSITE" id="PS50102">
    <property type="entry name" value="RRM"/>
    <property type="match status" value="1"/>
</dbReference>
<reference key="1">
    <citation type="journal article" date="2001" name="Genome Res.">
        <title>Sequence and analysis of chromosome I of the amitochondriate intracellular parasite Encephalitozoon cuniculi (Microspora).</title>
        <authorList>
            <person name="Peyret P."/>
            <person name="Katinka M.D."/>
            <person name="Duprat S."/>
            <person name="Duffieux F."/>
            <person name="Barbe V."/>
            <person name="Barbazanges M."/>
            <person name="Weissenbach J."/>
            <person name="Saurin W."/>
            <person name="Vivares C.P."/>
        </authorList>
    </citation>
    <scope>NUCLEOTIDE SEQUENCE [LARGE SCALE GENOMIC DNA]</scope>
    <source>
        <strain>GB-M1</strain>
    </source>
</reference>
<reference key="2">
    <citation type="journal article" date="2001" name="Nature">
        <title>Genome sequence and gene compaction of the eukaryote parasite Encephalitozoon cuniculi.</title>
        <authorList>
            <person name="Katinka M.D."/>
            <person name="Duprat S."/>
            <person name="Cornillot E."/>
            <person name="Metenier G."/>
            <person name="Thomarat F."/>
            <person name="Prensier G."/>
            <person name="Barbe V."/>
            <person name="Peyretaillade E."/>
            <person name="Brottier P."/>
            <person name="Wincker P."/>
            <person name="Delbac F."/>
            <person name="El Alaoui H."/>
            <person name="Peyret P."/>
            <person name="Saurin W."/>
            <person name="Gouy M."/>
            <person name="Weissenbach J."/>
            <person name="Vivares C.P."/>
        </authorList>
    </citation>
    <scope>NUCLEOTIDE SEQUENCE [LARGE SCALE GENOMIC DNA]</scope>
    <source>
        <strain>GB-M1</strain>
    </source>
</reference>
<reference key="3">
    <citation type="journal article" date="2006" name="Proteomics">
        <title>Proteomic analysis of the eukaryotic parasite Encephalitozoon cuniculi (microsporidia): a reference map for proteins expressed in late sporogonial stages.</title>
        <authorList>
            <person name="Brosson D."/>
            <person name="Kuhn L."/>
            <person name="Delbac F."/>
            <person name="Garin J."/>
            <person name="Vivares C.P."/>
            <person name="Texier C."/>
        </authorList>
    </citation>
    <scope>IDENTIFICATION BY MASS SPECTROMETRY [LARGE SCALE ANALYSIS]</scope>
    <scope>DEVELOPMENTAL STAGE</scope>
    <scope>SUBCELLULAR LOCATION</scope>
</reference>
<evidence type="ECO:0000255" key="1">
    <source>
        <dbReference type="PROSITE-ProRule" id="PRU00176"/>
    </source>
</evidence>
<evidence type="ECO:0000269" key="2">
    <source>
    </source>
</evidence>
<feature type="chain" id="PRO_0000383034" description="RRM-domain-containing protein ECU01_0840">
    <location>
        <begin position="1"/>
        <end position="163"/>
    </location>
</feature>
<feature type="domain" description="RRM" evidence="1">
    <location>
        <begin position="84"/>
        <end position="163"/>
    </location>
</feature>
<organism>
    <name type="scientific">Encephalitozoon cuniculi (strain GB-M1)</name>
    <name type="common">Microsporidian parasite</name>
    <dbReference type="NCBI Taxonomy" id="284813"/>
    <lineage>
        <taxon>Eukaryota</taxon>
        <taxon>Fungi</taxon>
        <taxon>Fungi incertae sedis</taxon>
        <taxon>Microsporidia</taxon>
        <taxon>Unikaryonidae</taxon>
        <taxon>Encephalitozoon</taxon>
    </lineage>
</organism>